<evidence type="ECO:0000250" key="1"/>
<evidence type="ECO:0000255" key="2"/>
<evidence type="ECO:0000305" key="3"/>
<sequence>MASVGLQFQASAGDADPQSRPLLLLGQLQHLHRVPWSHVRGKLQPRVTEELWQAALATLNPNPTDSCPLYLNCATVAALPSRVSRHNSPSAAHFITRLVRTCLPPGTHRCILMVCEQTEVFASACALARAFPLFTHRSGASRRAEKRTVMVEFFLVGQDNGPVEVSTLQCLTNATEGVRLAARIVDTPCNEMNTDIFLEEIIQVGKELGITPTIIRDEQLKTKGFGGIYGVGKAALHPPALAILSHTPDGATQTIAWVGKGIVYDTGGLSIKGKTTMPGMKRDCGGAAAVLGAFRAAIKQGFKDNLHAVFCLAENAVGPNATRPDDIHLLYSGKTVEINNTDAEGRLVLADGVSYACKDLGADIIVDMATLTGAQGIATGKYHAAVLTNSAEWEAACVKAGRKCGDLVHPLVYCPELHFSEFTSAVADMKNSVADRDNSPSSCAGLFIASHIGFDWPGVWVHLDIAAPVHAGERATGFGVALLLALFGRASEDPLLNLVSPLDCEVDAQEGDNMGRDSKRRRLV</sequence>
<gene>
    <name type="primary">Npepl1</name>
</gene>
<proteinExistence type="evidence at protein level"/>
<accession>Q6NSR8</accession>
<accession>A2ACM6</accession>
<accession>Q66JY0</accession>
<name>PEPL1_MOUSE</name>
<feature type="chain" id="PRO_0000165829" description="Probable aminopeptidase NPEPL1">
    <location>
        <begin position="1"/>
        <end position="524"/>
    </location>
</feature>
<feature type="active site" evidence="2">
    <location>
        <position position="272"/>
    </location>
</feature>
<feature type="active site" evidence="2">
    <location>
        <position position="346"/>
    </location>
</feature>
<feature type="binding site" evidence="1">
    <location>
        <position position="260"/>
    </location>
    <ligand>
        <name>Zn(2+)</name>
        <dbReference type="ChEBI" id="CHEBI:29105"/>
        <label>2</label>
    </ligand>
</feature>
<feature type="binding site" evidence="1">
    <location>
        <position position="265"/>
    </location>
    <ligand>
        <name>Zn(2+)</name>
        <dbReference type="ChEBI" id="CHEBI:29105"/>
        <label>1</label>
    </ligand>
</feature>
<feature type="binding site" evidence="1">
    <location>
        <position position="265"/>
    </location>
    <ligand>
        <name>Zn(2+)</name>
        <dbReference type="ChEBI" id="CHEBI:29105"/>
        <label>2</label>
    </ligand>
</feature>
<feature type="binding site" evidence="1">
    <location>
        <position position="283"/>
    </location>
    <ligand>
        <name>Zn(2+)</name>
        <dbReference type="ChEBI" id="CHEBI:29105"/>
        <label>2</label>
    </ligand>
</feature>
<feature type="binding site" evidence="1">
    <location>
        <position position="342"/>
    </location>
    <ligand>
        <name>Zn(2+)</name>
        <dbReference type="ChEBI" id="CHEBI:29105"/>
        <label>1</label>
    </ligand>
</feature>
<feature type="binding site" evidence="1">
    <location>
        <position position="344"/>
    </location>
    <ligand>
        <name>Zn(2+)</name>
        <dbReference type="ChEBI" id="CHEBI:29105"/>
        <label>1</label>
    </ligand>
</feature>
<feature type="binding site" evidence="1">
    <location>
        <position position="344"/>
    </location>
    <ligand>
        <name>Zn(2+)</name>
        <dbReference type="ChEBI" id="CHEBI:29105"/>
        <label>2</label>
    </ligand>
</feature>
<dbReference type="EC" id="3.4.11.-"/>
<dbReference type="EMBL" id="AL669896">
    <property type="status" value="NOT_ANNOTATED_CDS"/>
    <property type="molecule type" value="Genomic_DNA"/>
</dbReference>
<dbReference type="EMBL" id="BC069933">
    <property type="protein sequence ID" value="AAH69933.1"/>
    <property type="molecule type" value="mRNA"/>
</dbReference>
<dbReference type="EMBL" id="BC080707">
    <property type="protein sequence ID" value="AAH80707.1"/>
    <property type="molecule type" value="mRNA"/>
</dbReference>
<dbReference type="CCDS" id="CCDS17148.1"/>
<dbReference type="RefSeq" id="NP_998898.1">
    <property type="nucleotide sequence ID" value="NM_213733.2"/>
</dbReference>
<dbReference type="SMR" id="Q6NSR8"/>
<dbReference type="FunCoup" id="Q6NSR8">
    <property type="interactions" value="675"/>
</dbReference>
<dbReference type="STRING" id="10090.ENSMUSP00000042808"/>
<dbReference type="MEROPS" id="M17.006"/>
<dbReference type="iPTMnet" id="Q6NSR8"/>
<dbReference type="PhosphoSitePlus" id="Q6NSR8"/>
<dbReference type="SwissPalm" id="Q6NSR8"/>
<dbReference type="jPOST" id="Q6NSR8"/>
<dbReference type="PaxDb" id="10090-ENSMUSP00000042808"/>
<dbReference type="ProteomicsDB" id="288096"/>
<dbReference type="Antibodypedia" id="29150">
    <property type="antibodies" value="76 antibodies from 21 providers"/>
</dbReference>
<dbReference type="DNASU" id="228961"/>
<dbReference type="Ensembl" id="ENSMUST00000044415.16">
    <property type="protein sequence ID" value="ENSMUSP00000042808.10"/>
    <property type="gene ID" value="ENSMUSG00000039263.17"/>
</dbReference>
<dbReference type="GeneID" id="228961"/>
<dbReference type="KEGG" id="mmu:228961"/>
<dbReference type="UCSC" id="uc008oeo.2">
    <property type="organism name" value="mouse"/>
</dbReference>
<dbReference type="AGR" id="MGI:2448523"/>
<dbReference type="CTD" id="79716"/>
<dbReference type="MGI" id="MGI:2448523">
    <property type="gene designation" value="Npepl1"/>
</dbReference>
<dbReference type="VEuPathDB" id="HostDB:ENSMUSG00000039263"/>
<dbReference type="eggNOG" id="KOG2597">
    <property type="taxonomic scope" value="Eukaryota"/>
</dbReference>
<dbReference type="GeneTree" id="ENSGT00530000063255"/>
<dbReference type="HOGENOM" id="CLU_013734_3_1_1"/>
<dbReference type="InParanoid" id="Q6NSR8"/>
<dbReference type="OMA" id="MVCEQSD"/>
<dbReference type="OrthoDB" id="412814at2759"/>
<dbReference type="PhylomeDB" id="Q6NSR8"/>
<dbReference type="TreeFam" id="TF314954"/>
<dbReference type="BioGRID-ORCS" id="228961">
    <property type="hits" value="2 hits in 79 CRISPR screens"/>
</dbReference>
<dbReference type="ChiTaRS" id="Npepl1">
    <property type="organism name" value="mouse"/>
</dbReference>
<dbReference type="PRO" id="PR:Q6NSR8"/>
<dbReference type="Proteomes" id="UP000000589">
    <property type="component" value="Chromosome 2"/>
</dbReference>
<dbReference type="RNAct" id="Q6NSR8">
    <property type="molecule type" value="protein"/>
</dbReference>
<dbReference type="Bgee" id="ENSMUSG00000039263">
    <property type="expression patterns" value="Expressed in internal carotid artery and 234 other cell types or tissues"/>
</dbReference>
<dbReference type="ExpressionAtlas" id="Q6NSR8">
    <property type="expression patterns" value="baseline and differential"/>
</dbReference>
<dbReference type="GO" id="GO:0005737">
    <property type="term" value="C:cytoplasm"/>
    <property type="evidence" value="ECO:0007669"/>
    <property type="project" value="InterPro"/>
</dbReference>
<dbReference type="GO" id="GO:0030145">
    <property type="term" value="F:manganese ion binding"/>
    <property type="evidence" value="ECO:0007669"/>
    <property type="project" value="InterPro"/>
</dbReference>
<dbReference type="GO" id="GO:0070006">
    <property type="term" value="F:metalloaminopeptidase activity"/>
    <property type="evidence" value="ECO:0007669"/>
    <property type="project" value="InterPro"/>
</dbReference>
<dbReference type="GO" id="GO:0006508">
    <property type="term" value="P:proteolysis"/>
    <property type="evidence" value="ECO:0007669"/>
    <property type="project" value="UniProtKB-KW"/>
</dbReference>
<dbReference type="CDD" id="cd00433">
    <property type="entry name" value="Peptidase_M17"/>
    <property type="match status" value="1"/>
</dbReference>
<dbReference type="FunFam" id="3.40.50.10590:FF:000001">
    <property type="entry name" value="Probable aminopeptidase NPEPL1"/>
    <property type="match status" value="1"/>
</dbReference>
<dbReference type="FunFam" id="3.40.630.10:FF:000035">
    <property type="entry name" value="Probable aminopeptidase NPEPL1"/>
    <property type="match status" value="1"/>
</dbReference>
<dbReference type="Gene3D" id="3.40.630.10">
    <property type="entry name" value="Zn peptidases"/>
    <property type="match status" value="1"/>
</dbReference>
<dbReference type="Gene3D" id="3.40.50.10590">
    <property type="entry name" value="Zn-dependent exopeptidases"/>
    <property type="match status" value="1"/>
</dbReference>
<dbReference type="InterPro" id="IPR011356">
    <property type="entry name" value="Leucine_aapep/pepB"/>
</dbReference>
<dbReference type="InterPro" id="IPR041417">
    <property type="entry name" value="NPEPL1_N"/>
</dbReference>
<dbReference type="InterPro" id="IPR000819">
    <property type="entry name" value="Peptidase_M17_C"/>
</dbReference>
<dbReference type="PANTHER" id="PTHR11963:SF4">
    <property type="entry name" value="AMINOPEPTIDASE NPEPL1-RELATED"/>
    <property type="match status" value="1"/>
</dbReference>
<dbReference type="PANTHER" id="PTHR11963">
    <property type="entry name" value="LEUCINE AMINOPEPTIDASE-RELATED"/>
    <property type="match status" value="1"/>
</dbReference>
<dbReference type="Pfam" id="PF18295">
    <property type="entry name" value="Pdase_M17_N2"/>
    <property type="match status" value="1"/>
</dbReference>
<dbReference type="Pfam" id="PF00883">
    <property type="entry name" value="Peptidase_M17"/>
    <property type="match status" value="1"/>
</dbReference>
<dbReference type="PRINTS" id="PR00481">
    <property type="entry name" value="LAMNOPPTDASE"/>
</dbReference>
<dbReference type="SUPFAM" id="SSF53187">
    <property type="entry name" value="Zn-dependent exopeptidases"/>
    <property type="match status" value="1"/>
</dbReference>
<dbReference type="PROSITE" id="PS00631">
    <property type="entry name" value="CYTOSOL_AP"/>
    <property type="match status" value="1"/>
</dbReference>
<comment type="function">
    <text evidence="1">Probably catalyzes the removal of unsubstituted N-terminal amino acids from various peptides.</text>
</comment>
<comment type="cofactor">
    <cofactor evidence="1">
        <name>Zn(2+)</name>
        <dbReference type="ChEBI" id="CHEBI:29105"/>
    </cofactor>
    <cofactor evidence="1">
        <name>Mn(2+)</name>
        <dbReference type="ChEBI" id="CHEBI:29035"/>
    </cofactor>
</comment>
<comment type="similarity">
    <text evidence="3">Belongs to the peptidase M17 family.</text>
</comment>
<reference key="1">
    <citation type="journal article" date="2009" name="PLoS Biol.">
        <title>Lineage-specific biology revealed by a finished genome assembly of the mouse.</title>
        <authorList>
            <person name="Church D.M."/>
            <person name="Goodstadt L."/>
            <person name="Hillier L.W."/>
            <person name="Zody M.C."/>
            <person name="Goldstein S."/>
            <person name="She X."/>
            <person name="Bult C.J."/>
            <person name="Agarwala R."/>
            <person name="Cherry J.L."/>
            <person name="DiCuccio M."/>
            <person name="Hlavina W."/>
            <person name="Kapustin Y."/>
            <person name="Meric P."/>
            <person name="Maglott D."/>
            <person name="Birtle Z."/>
            <person name="Marques A.C."/>
            <person name="Graves T."/>
            <person name="Zhou S."/>
            <person name="Teague B."/>
            <person name="Potamousis K."/>
            <person name="Churas C."/>
            <person name="Place M."/>
            <person name="Herschleb J."/>
            <person name="Runnheim R."/>
            <person name="Forrest D."/>
            <person name="Amos-Landgraf J."/>
            <person name="Schwartz D.C."/>
            <person name="Cheng Z."/>
            <person name="Lindblad-Toh K."/>
            <person name="Eichler E.E."/>
            <person name="Ponting C.P."/>
        </authorList>
    </citation>
    <scope>NUCLEOTIDE SEQUENCE [LARGE SCALE GENOMIC DNA]</scope>
    <source>
        <strain>C57BL/6J</strain>
    </source>
</reference>
<reference key="2">
    <citation type="journal article" date="2004" name="Genome Res.">
        <title>The status, quality, and expansion of the NIH full-length cDNA project: the Mammalian Gene Collection (MGC).</title>
        <authorList>
            <consortium name="The MGC Project Team"/>
        </authorList>
    </citation>
    <scope>NUCLEOTIDE SEQUENCE [LARGE SCALE MRNA]</scope>
    <source>
        <strain>Czech II</strain>
        <tissue>Mammary gland</tissue>
        <tissue>Mammary tumor</tissue>
    </source>
</reference>
<reference key="3">
    <citation type="journal article" date="2010" name="Cell">
        <title>A tissue-specific atlas of mouse protein phosphorylation and expression.</title>
        <authorList>
            <person name="Huttlin E.L."/>
            <person name="Jedrychowski M.P."/>
            <person name="Elias J.E."/>
            <person name="Goswami T."/>
            <person name="Rad R."/>
            <person name="Beausoleil S.A."/>
            <person name="Villen J."/>
            <person name="Haas W."/>
            <person name="Sowa M.E."/>
            <person name="Gygi S.P."/>
        </authorList>
    </citation>
    <scope>IDENTIFICATION BY MASS SPECTROMETRY [LARGE SCALE ANALYSIS]</scope>
    <source>
        <tissue>Brown adipose tissue</tissue>
        <tissue>Heart</tissue>
        <tissue>Kidney</tissue>
        <tissue>Liver</tissue>
        <tissue>Lung</tissue>
        <tissue>Spleen</tissue>
    </source>
</reference>
<organism>
    <name type="scientific">Mus musculus</name>
    <name type="common">Mouse</name>
    <dbReference type="NCBI Taxonomy" id="10090"/>
    <lineage>
        <taxon>Eukaryota</taxon>
        <taxon>Metazoa</taxon>
        <taxon>Chordata</taxon>
        <taxon>Craniata</taxon>
        <taxon>Vertebrata</taxon>
        <taxon>Euteleostomi</taxon>
        <taxon>Mammalia</taxon>
        <taxon>Eutheria</taxon>
        <taxon>Euarchontoglires</taxon>
        <taxon>Glires</taxon>
        <taxon>Rodentia</taxon>
        <taxon>Myomorpha</taxon>
        <taxon>Muroidea</taxon>
        <taxon>Muridae</taxon>
        <taxon>Murinae</taxon>
        <taxon>Mus</taxon>
        <taxon>Mus</taxon>
    </lineage>
</organism>
<protein>
    <recommendedName>
        <fullName>Probable aminopeptidase NPEPL1</fullName>
        <ecNumber>3.4.11.-</ecNumber>
    </recommendedName>
    <alternativeName>
        <fullName>Aminopeptidase-like 1</fullName>
    </alternativeName>
</protein>
<keyword id="KW-0031">Aminopeptidase</keyword>
<keyword id="KW-0378">Hydrolase</keyword>
<keyword id="KW-0464">Manganese</keyword>
<keyword id="KW-0479">Metal-binding</keyword>
<keyword id="KW-0645">Protease</keyword>
<keyword id="KW-1185">Reference proteome</keyword>
<keyword id="KW-0862">Zinc</keyword>